<organism>
    <name type="scientific">Rickettsia peacockii (strain Rustic)</name>
    <dbReference type="NCBI Taxonomy" id="562019"/>
    <lineage>
        <taxon>Bacteria</taxon>
        <taxon>Pseudomonadati</taxon>
        <taxon>Pseudomonadota</taxon>
        <taxon>Alphaproteobacteria</taxon>
        <taxon>Rickettsiales</taxon>
        <taxon>Rickettsiaceae</taxon>
        <taxon>Rickettsieae</taxon>
        <taxon>Rickettsia</taxon>
        <taxon>spotted fever group</taxon>
    </lineage>
</organism>
<gene>
    <name evidence="1" type="primary">clpX</name>
    <name type="ordered locus">RPR_06610</name>
</gene>
<evidence type="ECO:0000255" key="1">
    <source>
        <dbReference type="HAMAP-Rule" id="MF_00175"/>
    </source>
</evidence>
<evidence type="ECO:0000255" key="2">
    <source>
        <dbReference type="PROSITE-ProRule" id="PRU01250"/>
    </source>
</evidence>
<protein>
    <recommendedName>
        <fullName evidence="1">ATP-dependent Clp protease ATP-binding subunit ClpX</fullName>
    </recommendedName>
</protein>
<keyword id="KW-0067">ATP-binding</keyword>
<keyword id="KW-0143">Chaperone</keyword>
<keyword id="KW-0479">Metal-binding</keyword>
<keyword id="KW-0547">Nucleotide-binding</keyword>
<keyword id="KW-0862">Zinc</keyword>
<feature type="chain" id="PRO_1000203742" description="ATP-dependent Clp protease ATP-binding subunit ClpX">
    <location>
        <begin position="1"/>
        <end position="425"/>
    </location>
</feature>
<feature type="domain" description="ClpX-type ZB" evidence="2">
    <location>
        <begin position="1"/>
        <end position="53"/>
    </location>
</feature>
<feature type="binding site" evidence="2">
    <location>
        <position position="12"/>
    </location>
    <ligand>
        <name>Zn(2+)</name>
        <dbReference type="ChEBI" id="CHEBI:29105"/>
    </ligand>
</feature>
<feature type="binding site" evidence="2">
    <location>
        <position position="15"/>
    </location>
    <ligand>
        <name>Zn(2+)</name>
        <dbReference type="ChEBI" id="CHEBI:29105"/>
    </ligand>
</feature>
<feature type="binding site" evidence="2">
    <location>
        <position position="34"/>
    </location>
    <ligand>
        <name>Zn(2+)</name>
        <dbReference type="ChEBI" id="CHEBI:29105"/>
    </ligand>
</feature>
<feature type="binding site" evidence="2">
    <location>
        <position position="37"/>
    </location>
    <ligand>
        <name>Zn(2+)</name>
        <dbReference type="ChEBI" id="CHEBI:29105"/>
    </ligand>
</feature>
<feature type="binding site" evidence="1">
    <location>
        <begin position="117"/>
        <end position="124"/>
    </location>
    <ligand>
        <name>ATP</name>
        <dbReference type="ChEBI" id="CHEBI:30616"/>
    </ligand>
</feature>
<reference key="1">
    <citation type="journal article" date="2009" name="PLoS ONE">
        <title>Genome sequence of the endosymbiont Rickettsia peacockii and comparison with virulent Rickettsia rickettsii: identification of virulence factors.</title>
        <authorList>
            <person name="Felsheim R.F."/>
            <person name="Kurtti T.J."/>
            <person name="Munderloh U.G."/>
        </authorList>
    </citation>
    <scope>NUCLEOTIDE SEQUENCE [LARGE SCALE GENOMIC DNA]</scope>
    <source>
        <strain>Rustic</strain>
    </source>
</reference>
<sequence>MVVEADKKALICSFCSKKQHEVKKLIAGPAVFICDECIDLCTDIMKEENKVALKQITSSIPTPQKICGILNDYVVGQDQAKKILAVAVYNHYKRLEYVQSGNNDVELNKSNILLIGPTGSGKTLLAQTLAKILDVPFTMADATSLTEAGYVGEDVENILLRLLIASEFNIAKAQKGIIYIDEVDKIARKSENPSITRDVSGEGVQQALLKIMEGTVASVPPQGGRKHPQQDFVQLDTSNILFICGGAFMGIDSIITSRTNHSSIGFAANVNMDKEKNNSEILKSLEIEDLTKFGLIPEFIGRLPIVTTLDELDKEALITILTKPKNAIVKQYQKQFELDDAELVIDDSALETIAEKALAKKTGARGLRSILEHLLLDSMYKVAELKRQRVTITKEVVNGLVEPIMTSLISTKSNKKQPIIADIPA</sequence>
<comment type="function">
    <text evidence="1">ATP-dependent specificity component of the Clp protease. It directs the protease to specific substrates. Can perform chaperone functions in the absence of ClpP.</text>
</comment>
<comment type="subunit">
    <text evidence="1">Component of the ClpX-ClpP complex. Forms a hexameric ring that, in the presence of ATP, binds to fourteen ClpP subunits assembled into a disk-like structure with a central cavity, resembling the structure of eukaryotic proteasomes.</text>
</comment>
<comment type="similarity">
    <text evidence="1">Belongs to the ClpX chaperone family.</text>
</comment>
<dbReference type="EMBL" id="CP001227">
    <property type="protein sequence ID" value="ACR47812.1"/>
    <property type="molecule type" value="Genomic_DNA"/>
</dbReference>
<dbReference type="RefSeq" id="WP_012736980.1">
    <property type="nucleotide sequence ID" value="NC_012730.1"/>
</dbReference>
<dbReference type="SMR" id="C4K2L5"/>
<dbReference type="KEGG" id="rpk:RPR_06610"/>
<dbReference type="HOGENOM" id="CLU_014218_8_2_5"/>
<dbReference type="Proteomes" id="UP000005015">
    <property type="component" value="Chromosome"/>
</dbReference>
<dbReference type="GO" id="GO:0009376">
    <property type="term" value="C:HslUV protease complex"/>
    <property type="evidence" value="ECO:0007669"/>
    <property type="project" value="TreeGrafter"/>
</dbReference>
<dbReference type="GO" id="GO:0005524">
    <property type="term" value="F:ATP binding"/>
    <property type="evidence" value="ECO:0007669"/>
    <property type="project" value="UniProtKB-UniRule"/>
</dbReference>
<dbReference type="GO" id="GO:0016887">
    <property type="term" value="F:ATP hydrolysis activity"/>
    <property type="evidence" value="ECO:0007669"/>
    <property type="project" value="InterPro"/>
</dbReference>
<dbReference type="GO" id="GO:0140662">
    <property type="term" value="F:ATP-dependent protein folding chaperone"/>
    <property type="evidence" value="ECO:0007669"/>
    <property type="project" value="InterPro"/>
</dbReference>
<dbReference type="GO" id="GO:0046983">
    <property type="term" value="F:protein dimerization activity"/>
    <property type="evidence" value="ECO:0007669"/>
    <property type="project" value="InterPro"/>
</dbReference>
<dbReference type="GO" id="GO:0051082">
    <property type="term" value="F:unfolded protein binding"/>
    <property type="evidence" value="ECO:0007669"/>
    <property type="project" value="UniProtKB-UniRule"/>
</dbReference>
<dbReference type="GO" id="GO:0008270">
    <property type="term" value="F:zinc ion binding"/>
    <property type="evidence" value="ECO:0007669"/>
    <property type="project" value="InterPro"/>
</dbReference>
<dbReference type="GO" id="GO:0051301">
    <property type="term" value="P:cell division"/>
    <property type="evidence" value="ECO:0007669"/>
    <property type="project" value="TreeGrafter"/>
</dbReference>
<dbReference type="GO" id="GO:0051603">
    <property type="term" value="P:proteolysis involved in protein catabolic process"/>
    <property type="evidence" value="ECO:0007669"/>
    <property type="project" value="TreeGrafter"/>
</dbReference>
<dbReference type="CDD" id="cd19497">
    <property type="entry name" value="RecA-like_ClpX"/>
    <property type="match status" value="1"/>
</dbReference>
<dbReference type="FunFam" id="1.10.8.60:FF:000002">
    <property type="entry name" value="ATP-dependent Clp protease ATP-binding subunit ClpX"/>
    <property type="match status" value="1"/>
</dbReference>
<dbReference type="FunFam" id="3.40.50.300:FF:000005">
    <property type="entry name" value="ATP-dependent Clp protease ATP-binding subunit ClpX"/>
    <property type="match status" value="1"/>
</dbReference>
<dbReference type="Gene3D" id="1.10.8.60">
    <property type="match status" value="1"/>
</dbReference>
<dbReference type="Gene3D" id="6.20.220.10">
    <property type="entry name" value="ClpX chaperone, C4-type zinc finger domain"/>
    <property type="match status" value="1"/>
</dbReference>
<dbReference type="Gene3D" id="3.40.50.300">
    <property type="entry name" value="P-loop containing nucleotide triphosphate hydrolases"/>
    <property type="match status" value="1"/>
</dbReference>
<dbReference type="HAMAP" id="MF_00175">
    <property type="entry name" value="ClpX"/>
    <property type="match status" value="1"/>
</dbReference>
<dbReference type="InterPro" id="IPR003593">
    <property type="entry name" value="AAA+_ATPase"/>
</dbReference>
<dbReference type="InterPro" id="IPR050052">
    <property type="entry name" value="ATP-dep_Clp_protease_ClpX"/>
</dbReference>
<dbReference type="InterPro" id="IPR003959">
    <property type="entry name" value="ATPase_AAA_core"/>
</dbReference>
<dbReference type="InterPro" id="IPR019489">
    <property type="entry name" value="Clp_ATPase_C"/>
</dbReference>
<dbReference type="InterPro" id="IPR004487">
    <property type="entry name" value="Clp_protease_ATP-bd_su_ClpX"/>
</dbReference>
<dbReference type="InterPro" id="IPR046425">
    <property type="entry name" value="ClpX_bact"/>
</dbReference>
<dbReference type="InterPro" id="IPR027417">
    <property type="entry name" value="P-loop_NTPase"/>
</dbReference>
<dbReference type="InterPro" id="IPR010603">
    <property type="entry name" value="Znf_CppX_C4"/>
</dbReference>
<dbReference type="InterPro" id="IPR038366">
    <property type="entry name" value="Znf_CppX_C4_sf"/>
</dbReference>
<dbReference type="NCBIfam" id="TIGR00382">
    <property type="entry name" value="clpX"/>
    <property type="match status" value="1"/>
</dbReference>
<dbReference type="NCBIfam" id="NF003745">
    <property type="entry name" value="PRK05342.1"/>
    <property type="match status" value="1"/>
</dbReference>
<dbReference type="PANTHER" id="PTHR48102:SF7">
    <property type="entry name" value="ATP-DEPENDENT CLP PROTEASE ATP-BINDING SUBUNIT CLPX-LIKE, MITOCHONDRIAL"/>
    <property type="match status" value="1"/>
</dbReference>
<dbReference type="PANTHER" id="PTHR48102">
    <property type="entry name" value="ATP-DEPENDENT CLP PROTEASE ATP-BINDING SUBUNIT CLPX-LIKE, MITOCHONDRIAL-RELATED"/>
    <property type="match status" value="1"/>
</dbReference>
<dbReference type="Pfam" id="PF07724">
    <property type="entry name" value="AAA_2"/>
    <property type="match status" value="1"/>
</dbReference>
<dbReference type="Pfam" id="PF10431">
    <property type="entry name" value="ClpB_D2-small"/>
    <property type="match status" value="1"/>
</dbReference>
<dbReference type="Pfam" id="PF06689">
    <property type="entry name" value="zf-C4_ClpX"/>
    <property type="match status" value="1"/>
</dbReference>
<dbReference type="SMART" id="SM00382">
    <property type="entry name" value="AAA"/>
    <property type="match status" value="1"/>
</dbReference>
<dbReference type="SMART" id="SM01086">
    <property type="entry name" value="ClpB_D2-small"/>
    <property type="match status" value="1"/>
</dbReference>
<dbReference type="SMART" id="SM00994">
    <property type="entry name" value="zf-C4_ClpX"/>
    <property type="match status" value="1"/>
</dbReference>
<dbReference type="SUPFAM" id="SSF57716">
    <property type="entry name" value="Glucocorticoid receptor-like (DNA-binding domain)"/>
    <property type="match status" value="1"/>
</dbReference>
<dbReference type="SUPFAM" id="SSF52540">
    <property type="entry name" value="P-loop containing nucleoside triphosphate hydrolases"/>
    <property type="match status" value="1"/>
</dbReference>
<dbReference type="PROSITE" id="PS51902">
    <property type="entry name" value="CLPX_ZB"/>
    <property type="match status" value="1"/>
</dbReference>
<name>CLPX_RICPU</name>
<proteinExistence type="inferred from homology"/>
<accession>C4K2L5</accession>